<name>RS16_RICAE</name>
<keyword id="KW-0687">Ribonucleoprotein</keyword>
<keyword id="KW-0689">Ribosomal protein</keyword>
<evidence type="ECO:0000255" key="1">
    <source>
        <dbReference type="HAMAP-Rule" id="MF_00385"/>
    </source>
</evidence>
<evidence type="ECO:0000305" key="2"/>
<dbReference type="EMBL" id="CP001612">
    <property type="protein sequence ID" value="ACP54010.1"/>
    <property type="molecule type" value="Genomic_DNA"/>
</dbReference>
<dbReference type="RefSeq" id="WP_004997078.1">
    <property type="nucleotide sequence ID" value="NC_012633.1"/>
</dbReference>
<dbReference type="SMR" id="C3PM20"/>
<dbReference type="GeneID" id="95361740"/>
<dbReference type="KEGG" id="raf:RAF_ORF1245"/>
<dbReference type="HOGENOM" id="CLU_100590_3_1_5"/>
<dbReference type="Proteomes" id="UP000002305">
    <property type="component" value="Chromosome"/>
</dbReference>
<dbReference type="GO" id="GO:0005737">
    <property type="term" value="C:cytoplasm"/>
    <property type="evidence" value="ECO:0007669"/>
    <property type="project" value="UniProtKB-ARBA"/>
</dbReference>
<dbReference type="GO" id="GO:0015935">
    <property type="term" value="C:small ribosomal subunit"/>
    <property type="evidence" value="ECO:0007669"/>
    <property type="project" value="TreeGrafter"/>
</dbReference>
<dbReference type="GO" id="GO:0003735">
    <property type="term" value="F:structural constituent of ribosome"/>
    <property type="evidence" value="ECO:0007669"/>
    <property type="project" value="InterPro"/>
</dbReference>
<dbReference type="GO" id="GO:0006412">
    <property type="term" value="P:translation"/>
    <property type="evidence" value="ECO:0007669"/>
    <property type="project" value="UniProtKB-UniRule"/>
</dbReference>
<dbReference type="Gene3D" id="3.30.1320.10">
    <property type="match status" value="1"/>
</dbReference>
<dbReference type="HAMAP" id="MF_00385">
    <property type="entry name" value="Ribosomal_bS16"/>
    <property type="match status" value="1"/>
</dbReference>
<dbReference type="InterPro" id="IPR000307">
    <property type="entry name" value="Ribosomal_bS16"/>
</dbReference>
<dbReference type="InterPro" id="IPR020592">
    <property type="entry name" value="Ribosomal_bS16_CS"/>
</dbReference>
<dbReference type="InterPro" id="IPR023803">
    <property type="entry name" value="Ribosomal_bS16_dom_sf"/>
</dbReference>
<dbReference type="NCBIfam" id="TIGR00002">
    <property type="entry name" value="S16"/>
    <property type="match status" value="1"/>
</dbReference>
<dbReference type="PANTHER" id="PTHR12919">
    <property type="entry name" value="30S RIBOSOMAL PROTEIN S16"/>
    <property type="match status" value="1"/>
</dbReference>
<dbReference type="PANTHER" id="PTHR12919:SF20">
    <property type="entry name" value="SMALL RIBOSOMAL SUBUNIT PROTEIN BS16M"/>
    <property type="match status" value="1"/>
</dbReference>
<dbReference type="Pfam" id="PF00886">
    <property type="entry name" value="Ribosomal_S16"/>
    <property type="match status" value="1"/>
</dbReference>
<dbReference type="SUPFAM" id="SSF54565">
    <property type="entry name" value="Ribosomal protein S16"/>
    <property type="match status" value="1"/>
</dbReference>
<dbReference type="PROSITE" id="PS00732">
    <property type="entry name" value="RIBOSOMAL_S16"/>
    <property type="match status" value="1"/>
</dbReference>
<gene>
    <name evidence="1" type="primary">rpsP</name>
    <name type="ordered locus">RAF_ORF1245</name>
</gene>
<accession>C3PM20</accession>
<proteinExistence type="inferred from homology"/>
<sequence>MAVKIRLARGGAKKRPFYRVVVANATAPRDGDFLEKVGTYDPMLASDNSERVVLKKDRIEYWLGTGAKPTERVAKFIEQAGVTLPEKVKKEMEVKAKNRKARLSKKEAKEA</sequence>
<comment type="similarity">
    <text evidence="1">Belongs to the bacterial ribosomal protein bS16 family.</text>
</comment>
<feature type="chain" id="PRO_1000205771" description="Small ribosomal subunit protein bS16">
    <location>
        <begin position="1"/>
        <end position="111"/>
    </location>
</feature>
<organism>
    <name type="scientific">Rickettsia africae (strain ESF-5)</name>
    <dbReference type="NCBI Taxonomy" id="347255"/>
    <lineage>
        <taxon>Bacteria</taxon>
        <taxon>Pseudomonadati</taxon>
        <taxon>Pseudomonadota</taxon>
        <taxon>Alphaproteobacteria</taxon>
        <taxon>Rickettsiales</taxon>
        <taxon>Rickettsiaceae</taxon>
        <taxon>Rickettsieae</taxon>
        <taxon>Rickettsia</taxon>
        <taxon>spotted fever group</taxon>
    </lineage>
</organism>
<reference key="1">
    <citation type="journal article" date="2009" name="BMC Genomics">
        <title>Analysis of the Rickettsia africae genome reveals that virulence acquisition in Rickettsia species may be explained by genome reduction.</title>
        <authorList>
            <person name="Fournier P.-E."/>
            <person name="El Karkouri K."/>
            <person name="Leroy Q."/>
            <person name="Robert C."/>
            <person name="Giumelli B."/>
            <person name="Renesto P."/>
            <person name="Socolovschi C."/>
            <person name="Parola P."/>
            <person name="Audic S."/>
            <person name="Raoult D."/>
        </authorList>
    </citation>
    <scope>NUCLEOTIDE SEQUENCE [LARGE SCALE GENOMIC DNA]</scope>
    <source>
        <strain>ESF-5</strain>
    </source>
</reference>
<protein>
    <recommendedName>
        <fullName evidence="1">Small ribosomal subunit protein bS16</fullName>
    </recommendedName>
    <alternativeName>
        <fullName evidence="2">30S ribosomal protein S16</fullName>
    </alternativeName>
</protein>